<evidence type="ECO:0000255" key="1">
    <source>
        <dbReference type="HAMAP-Rule" id="MF_00202"/>
    </source>
</evidence>
<organism>
    <name type="scientific">Escherichia coli O17:K52:H18 (strain UMN026 / ExPEC)</name>
    <dbReference type="NCBI Taxonomy" id="585056"/>
    <lineage>
        <taxon>Bacteria</taxon>
        <taxon>Pseudomonadati</taxon>
        <taxon>Pseudomonadota</taxon>
        <taxon>Gammaproteobacteria</taxon>
        <taxon>Enterobacterales</taxon>
        <taxon>Enterobacteriaceae</taxon>
        <taxon>Escherichia</taxon>
    </lineage>
</organism>
<protein>
    <recommendedName>
        <fullName evidence="1">Isopentenyl-diphosphate Delta-isomerase</fullName>
        <shortName evidence="1">IPP isomerase</shortName>
        <ecNumber evidence="1">5.3.3.2</ecNumber>
    </recommendedName>
    <alternativeName>
        <fullName evidence="1">IPP:DMAPP isomerase</fullName>
    </alternativeName>
    <alternativeName>
        <fullName evidence="1">Isopentenyl pyrophosphate isomerase</fullName>
    </alternativeName>
</protein>
<feature type="chain" id="PRO_1000118726" description="Isopentenyl-diphosphate Delta-isomerase">
    <location>
        <begin position="1"/>
        <end position="182"/>
    </location>
</feature>
<feature type="domain" description="Nudix hydrolase">
    <location>
        <begin position="30"/>
        <end position="164"/>
    </location>
</feature>
<feature type="active site" evidence="1">
    <location>
        <position position="67"/>
    </location>
</feature>
<feature type="active site" evidence="1">
    <location>
        <position position="116"/>
    </location>
</feature>
<feature type="binding site" evidence="1">
    <location>
        <position position="25"/>
    </location>
    <ligand>
        <name>Mn(2+)</name>
        <dbReference type="ChEBI" id="CHEBI:29035"/>
    </ligand>
</feature>
<feature type="binding site" evidence="1">
    <location>
        <position position="32"/>
    </location>
    <ligand>
        <name>Mn(2+)</name>
        <dbReference type="ChEBI" id="CHEBI:29035"/>
    </ligand>
</feature>
<feature type="binding site" evidence="1">
    <location>
        <position position="69"/>
    </location>
    <ligand>
        <name>Mn(2+)</name>
        <dbReference type="ChEBI" id="CHEBI:29035"/>
    </ligand>
</feature>
<feature type="binding site" evidence="1">
    <location>
        <position position="87"/>
    </location>
    <ligand>
        <name>Mg(2+)</name>
        <dbReference type="ChEBI" id="CHEBI:18420"/>
    </ligand>
</feature>
<feature type="binding site" evidence="1">
    <location>
        <position position="114"/>
    </location>
    <ligand>
        <name>Mn(2+)</name>
        <dbReference type="ChEBI" id="CHEBI:29035"/>
    </ligand>
</feature>
<feature type="binding site" evidence="1">
    <location>
        <position position="116"/>
    </location>
    <ligand>
        <name>Mn(2+)</name>
        <dbReference type="ChEBI" id="CHEBI:29035"/>
    </ligand>
</feature>
<proteinExistence type="inferred from homology"/>
<dbReference type="EC" id="5.3.3.2" evidence="1"/>
<dbReference type="EMBL" id="CU928163">
    <property type="protein sequence ID" value="CAR14395.1"/>
    <property type="molecule type" value="Genomic_DNA"/>
</dbReference>
<dbReference type="RefSeq" id="WP_001192806.1">
    <property type="nucleotide sequence ID" value="NC_011751.1"/>
</dbReference>
<dbReference type="RefSeq" id="YP_002413914.1">
    <property type="nucleotide sequence ID" value="NC_011751.1"/>
</dbReference>
<dbReference type="SMR" id="B7N7D3"/>
<dbReference type="STRING" id="585056.ECUMN_3231"/>
<dbReference type="KEGG" id="eum:ECUMN_3231"/>
<dbReference type="PATRIC" id="fig|585056.7.peg.3406"/>
<dbReference type="HOGENOM" id="CLU_060552_2_0_6"/>
<dbReference type="UniPathway" id="UPA00059">
    <property type="reaction ID" value="UER00104"/>
</dbReference>
<dbReference type="Proteomes" id="UP000007097">
    <property type="component" value="Chromosome"/>
</dbReference>
<dbReference type="GO" id="GO:0005737">
    <property type="term" value="C:cytoplasm"/>
    <property type="evidence" value="ECO:0007669"/>
    <property type="project" value="UniProtKB-SubCell"/>
</dbReference>
<dbReference type="GO" id="GO:0004452">
    <property type="term" value="F:isopentenyl-diphosphate delta-isomerase activity"/>
    <property type="evidence" value="ECO:0007669"/>
    <property type="project" value="UniProtKB-UniRule"/>
</dbReference>
<dbReference type="GO" id="GO:0046872">
    <property type="term" value="F:metal ion binding"/>
    <property type="evidence" value="ECO:0007669"/>
    <property type="project" value="UniProtKB-KW"/>
</dbReference>
<dbReference type="GO" id="GO:0050992">
    <property type="term" value="P:dimethylallyl diphosphate biosynthetic process"/>
    <property type="evidence" value="ECO:0007669"/>
    <property type="project" value="UniProtKB-UniRule"/>
</dbReference>
<dbReference type="GO" id="GO:0008299">
    <property type="term" value="P:isoprenoid biosynthetic process"/>
    <property type="evidence" value="ECO:0007669"/>
    <property type="project" value="UniProtKB-KW"/>
</dbReference>
<dbReference type="CDD" id="cd02885">
    <property type="entry name" value="NUDIX_IPP_Isomerase"/>
    <property type="match status" value="1"/>
</dbReference>
<dbReference type="FunFam" id="3.90.79.10:FF:000009">
    <property type="entry name" value="Isopentenyl-diphosphate Delta-isomerase"/>
    <property type="match status" value="1"/>
</dbReference>
<dbReference type="Gene3D" id="3.90.79.10">
    <property type="entry name" value="Nucleoside Triphosphate Pyrophosphohydrolase"/>
    <property type="match status" value="1"/>
</dbReference>
<dbReference type="HAMAP" id="MF_00202">
    <property type="entry name" value="Idi"/>
    <property type="match status" value="1"/>
</dbReference>
<dbReference type="InterPro" id="IPR056375">
    <property type="entry name" value="Idi_bact"/>
</dbReference>
<dbReference type="InterPro" id="IPR011876">
    <property type="entry name" value="IsopentenylPP_isomerase_typ1"/>
</dbReference>
<dbReference type="InterPro" id="IPR015797">
    <property type="entry name" value="NUDIX_hydrolase-like_dom_sf"/>
</dbReference>
<dbReference type="InterPro" id="IPR000086">
    <property type="entry name" value="NUDIX_hydrolase_dom"/>
</dbReference>
<dbReference type="NCBIfam" id="TIGR02150">
    <property type="entry name" value="IPP_isom_1"/>
    <property type="match status" value="1"/>
</dbReference>
<dbReference type="NCBIfam" id="NF002995">
    <property type="entry name" value="PRK03759.1"/>
    <property type="match status" value="1"/>
</dbReference>
<dbReference type="PANTHER" id="PTHR10885">
    <property type="entry name" value="ISOPENTENYL-DIPHOSPHATE DELTA-ISOMERASE"/>
    <property type="match status" value="1"/>
</dbReference>
<dbReference type="PANTHER" id="PTHR10885:SF0">
    <property type="entry name" value="ISOPENTENYL-DIPHOSPHATE DELTA-ISOMERASE"/>
    <property type="match status" value="1"/>
</dbReference>
<dbReference type="Pfam" id="PF00293">
    <property type="entry name" value="NUDIX"/>
    <property type="match status" value="1"/>
</dbReference>
<dbReference type="PIRSF" id="PIRSF018427">
    <property type="entry name" value="Isopntndiph_ism"/>
    <property type="match status" value="1"/>
</dbReference>
<dbReference type="SUPFAM" id="SSF55811">
    <property type="entry name" value="Nudix"/>
    <property type="match status" value="1"/>
</dbReference>
<dbReference type="PROSITE" id="PS51462">
    <property type="entry name" value="NUDIX"/>
    <property type="match status" value="1"/>
</dbReference>
<comment type="function">
    <text evidence="1">Catalyzes the 1,3-allylic rearrangement of the homoallylic substrate isopentenyl (IPP) to its highly electrophilic allylic isomer, dimethylallyl diphosphate (DMAPP).</text>
</comment>
<comment type="catalytic activity">
    <reaction evidence="1">
        <text>isopentenyl diphosphate = dimethylallyl diphosphate</text>
        <dbReference type="Rhea" id="RHEA:23284"/>
        <dbReference type="ChEBI" id="CHEBI:57623"/>
        <dbReference type="ChEBI" id="CHEBI:128769"/>
        <dbReference type="EC" id="5.3.3.2"/>
    </reaction>
</comment>
<comment type="cofactor">
    <cofactor evidence="1">
        <name>Mg(2+)</name>
        <dbReference type="ChEBI" id="CHEBI:18420"/>
    </cofactor>
    <text evidence="1">Binds 1 Mg(2+) ion per subunit. The magnesium ion binds only when substrate is bound.</text>
</comment>
<comment type="cofactor">
    <cofactor evidence="1">
        <name>Mn(2+)</name>
        <dbReference type="ChEBI" id="CHEBI:29035"/>
    </cofactor>
    <text evidence="1">Binds 1 Mn(2+) ion per subunit.</text>
</comment>
<comment type="pathway">
    <text evidence="1">Isoprenoid biosynthesis; dimethylallyl diphosphate biosynthesis; dimethylallyl diphosphate from isopentenyl diphosphate: step 1/1.</text>
</comment>
<comment type="subunit">
    <text evidence="1">Homodimer.</text>
</comment>
<comment type="subcellular location">
    <subcellularLocation>
        <location evidence="1">Cytoplasm</location>
    </subcellularLocation>
</comment>
<comment type="similarity">
    <text evidence="1">Belongs to the IPP isomerase type 1 family.</text>
</comment>
<keyword id="KW-0963">Cytoplasm</keyword>
<keyword id="KW-0413">Isomerase</keyword>
<keyword id="KW-0414">Isoprene biosynthesis</keyword>
<keyword id="KW-0460">Magnesium</keyword>
<keyword id="KW-0464">Manganese</keyword>
<keyword id="KW-0479">Metal-binding</keyword>
<accession>B7N7D3</accession>
<reference key="1">
    <citation type="journal article" date="2009" name="PLoS Genet.">
        <title>Organised genome dynamics in the Escherichia coli species results in highly diverse adaptive paths.</title>
        <authorList>
            <person name="Touchon M."/>
            <person name="Hoede C."/>
            <person name="Tenaillon O."/>
            <person name="Barbe V."/>
            <person name="Baeriswyl S."/>
            <person name="Bidet P."/>
            <person name="Bingen E."/>
            <person name="Bonacorsi S."/>
            <person name="Bouchier C."/>
            <person name="Bouvet O."/>
            <person name="Calteau A."/>
            <person name="Chiapello H."/>
            <person name="Clermont O."/>
            <person name="Cruveiller S."/>
            <person name="Danchin A."/>
            <person name="Diard M."/>
            <person name="Dossat C."/>
            <person name="Karoui M.E."/>
            <person name="Frapy E."/>
            <person name="Garry L."/>
            <person name="Ghigo J.M."/>
            <person name="Gilles A.M."/>
            <person name="Johnson J."/>
            <person name="Le Bouguenec C."/>
            <person name="Lescat M."/>
            <person name="Mangenot S."/>
            <person name="Martinez-Jehanne V."/>
            <person name="Matic I."/>
            <person name="Nassif X."/>
            <person name="Oztas S."/>
            <person name="Petit M.A."/>
            <person name="Pichon C."/>
            <person name="Rouy Z."/>
            <person name="Ruf C.S."/>
            <person name="Schneider D."/>
            <person name="Tourret J."/>
            <person name="Vacherie B."/>
            <person name="Vallenet D."/>
            <person name="Medigue C."/>
            <person name="Rocha E.P.C."/>
            <person name="Denamur E."/>
        </authorList>
    </citation>
    <scope>NUCLEOTIDE SEQUENCE [LARGE SCALE GENOMIC DNA]</scope>
    <source>
        <strain>UMN026 / ExPEC</strain>
    </source>
</reference>
<gene>
    <name evidence="1" type="primary">idi</name>
    <name type="ordered locus">ECUMN_3231</name>
</gene>
<name>IDI_ECOLU</name>
<sequence length="182" mass="20321">MQTEHVILLNAQGVPTGTLEKYAAHTADTLLHLAFSSWLFNAKGQLLVTRRALSKKAWPGVWTNSVCGHPQMGESNEDAVIRRCRFELGVEITAPEPVYPDFRYRATDPNGIVENEVCPVFAARTTSALQINDDEVMDYQWCDLADVLRGIDATPWAFSPWMVMQAANSEARKLLSAFAQHN</sequence>